<comment type="function">
    <text evidence="6 7 8 11">Rab4/Rab5 effector protein acting in early endocytic membrane fusion and membrane trafficking of recycling endosomes. Required for endosome fusion either homotypically or with clathrin coated vesicles. Plays a role in the lysosomal trafficking of CTSD/cathepsin D from the Golgi to lysosomes. Also promotes the recycling of transferrin directly from early endosomes to the plasma membrane. Binds phospholipid vesicles containing phosphatidylinositol 3-phosphate (PtdInsP3) (PubMed:11062261, PubMed:11788822, PubMed:15020713). Plays a role in the recycling of transferrin receptor to the plasma membrane (PubMed:22308388).</text>
</comment>
<comment type="subunit">
    <text evidence="6 7 8 9 10">Interacts with EHD1, RAB4A, RAB5A, RAB14, RAB22A, RAB24 and VPS45 (PubMed:11062261, PubMed:15020713, PubMed:16034420). Binds simultaneously to RAB4A and RAB5A in vitro (PubMed:16034420). Interacts with RAB4A and RAB5A that has been activated by GTP binding (PubMed:11062261, PubMed:11788822, PubMed:16034420, PubMed:20098723).</text>
</comment>
<comment type="interaction">
    <interactant intactId="EBI-1105310">
        <id>Q9H1K0</id>
    </interactant>
    <interactant intactId="EBI-490691">
        <id>Q9H4M9</id>
        <label>EHD1</label>
    </interactant>
    <organismsDiffer>false</organismsDiffer>
    <experiments>6</experiments>
</comment>
<comment type="interaction">
    <interactant intactId="EBI-1105310">
        <id>Q9H1K0</id>
    </interactant>
    <interactant intactId="EBI-2870749">
        <id>Q9NZN3</id>
        <label>EHD3</label>
    </interactant>
    <organismsDiffer>false</organismsDiffer>
    <experiments>3</experiments>
</comment>
<comment type="interaction">
    <interactant intactId="EBI-1105310">
        <id>Q9H1K0</id>
    </interactant>
    <interactant intactId="EBI-722284">
        <id>P20338</id>
        <label>RAB4A</label>
    </interactant>
    <organismsDiffer>false</organismsDiffer>
    <experiments>4</experiments>
</comment>
<comment type="interaction">
    <interactant intactId="EBI-1105310">
        <id>Q9H1K0</id>
    </interactant>
    <interactant intactId="EBI-1782543">
        <id>Q9NRW7</id>
        <label>VPS45</label>
    </interactant>
    <organismsDiffer>false</organismsDiffer>
    <experiments>7</experiments>
</comment>
<comment type="subcellular location">
    <subcellularLocation>
        <location>Cell membrane</location>
        <topology>Lipid-anchor</topology>
        <orientation>Cytoplasmic side</orientation>
    </subcellularLocation>
    <subcellularLocation>
        <location evidence="11 14">Early endosome membrane</location>
        <topology>Lipid-anchor</topology>
    </subcellularLocation>
    <text evidence="11">Enriched in endosomes that are in close proximity to clathrin-enriched regions at the cell surface.</text>
</comment>
<comment type="alternative products">
    <event type="alternative splicing"/>
    <isoform>
        <id>Q9H1K0-1</id>
        <name>1</name>
        <sequence type="displayed"/>
    </isoform>
    <isoform>
        <id>Q9H1K0-2</id>
        <name>2</name>
        <sequence type="described" ref="VSP_056003 VSP_056004"/>
    </isoform>
</comment>
<comment type="disease" evidence="14">
    <disease id="DI-06937">
        <name>Kariminejad neurodevelopmental syndrome</name>
        <acronym>KAREVS</acronym>
        <description>An autosomal recessive disorder characterized by global developmental delay, progressive muscle weakness, facial dysmorphisms, ophthalmoplegia and intellectual disability.</description>
        <dbReference type="MIM" id="620937"/>
    </disease>
    <text>The disease is caused by variants affecting the gene represented in this entry.</text>
</comment>
<comment type="disease" evidence="13">
    <disease id="DI-06938">
        <name>Myelofibrosis, congenital, with anemia, neutropenia, developmental delay, and ocular abnormalities</name>
        <acronym>MFANDO</acronym>
        <description>An autosomal recessive disorder characterized by neutropenia, anemia, thrombocytopenia, and myelofibrosis. Additional features include global developmental delay, osteopenia, delayed bone age, ocular abnormalities, and facial dysmorphism.</description>
        <dbReference type="MIM" id="620939"/>
    </disease>
    <text evidence="13">The disease is caused by variants affecting the gene represented in this entry. The genetic variation NM_022340.3:c.289G&gt;C producing the missense variant p.Gly97Arg has been shown to predominantly affect splicing, leading to skipping of exon 5 or presence of an alternative exon 5a or retention of exon 5 and its neighboring introns. In one family, the homozygous proband showed no normally spliced transcript, while in her heterozygous father, normal transcripts represented 45%. The protein resulting from this aberrant splicing may be unstable, as it could not be detected in the proband's cells.</text>
</comment>
<comment type="sequence caution" evidence="17">
    <conflict type="erroneous initiation">
        <sequence resource="EMBL-CDS" id="BAC03860"/>
    </conflict>
    <text>Truncated N-terminus.</text>
</comment>
<comment type="sequence caution" evidence="17">
    <conflict type="erroneous initiation">
        <sequence resource="EMBL-CDS" id="BAD92910"/>
    </conflict>
    <text>Extended N-terminus.</text>
</comment>
<sequence length="784" mass="88870">MASLDDPGEVREGFLCPLCLKDLQSFYQLHSHYEEEHSGEDRDVKGQIKSLVQKAKKAKDRLLKREGDDRAESGTQGYESFSYGGVDPYMWEPQELGAVRSHLSDFKKHRAARIDHYVVEVNKLIIRLEKLTAFDRTNTESAKIRAIEKSVVPWVNDQDVPFCPDCGNKFSIRNRRHHCRLCGSIMCKKCMELISLPLANKLTSASKESLSTHTSPSQSPNSVHGSRRGSISSMSSVSSVLDEKDDDRIRCCTHCKDTLLKREQQIDEKEHTPDIVKLYEKLRLCMEKVDQKAPEYIRMAASLNAGETTYSLEHASDLRVEVQKVYELIDALSKKILTLGLNQDPPPHPSNLRLQRMIRYSATLFVQEKLLGLMSLPTKEQFEELKKKRKEEMERKRAVERQAALESQRRLEERQSGLASRAANGEVASLRRGPAPLRKAEGWLPLSGGQGQSEDSDPLLQQIHNITSFIRQAKAAGRMDEVRTLQENLRQLQDEYDQQQTEKAIELSRRQAEEEDLQREQLQMLRERELEREREQFRVASLHTRTRSLDFREIGPFQLEPSREPRTHLAYALDLGSSPVPSSTAPKTPSLSSTQPTRVWSGPPAVGQERLPQSSMPQQHEGPSLNPFDEEDLSSPMEEATTGPPAAGVSLDPSARILKEYNPFEEEDEEEEAVAGNPFIQPDSPAPNPFSEEDEHPQQRLSSPLVPGNPFEEPTCINPFEMDSDSGPEAEEPIEEELLLQQIDNIKAYIFDAKQCGRLDEVEVLTENLRELKHTLAKQKGGTD</sequence>
<accession>Q9H1K0</accession>
<accession>B4DWY8</accession>
<accession>C9J4P5</accession>
<accession>Q3KP30</accession>
<accession>Q59EY8</accession>
<accession>Q8NAQ1</accession>
<keyword id="KW-0002">3D-structure</keyword>
<keyword id="KW-0007">Acetylation</keyword>
<keyword id="KW-0025">Alternative splicing</keyword>
<keyword id="KW-1003">Cell membrane</keyword>
<keyword id="KW-0175">Coiled coil</keyword>
<keyword id="KW-0225">Disease variant</keyword>
<keyword id="KW-0967">Endosome</keyword>
<keyword id="KW-0991">Intellectual disability</keyword>
<keyword id="KW-0449">Lipoprotein</keyword>
<keyword id="KW-0472">Membrane</keyword>
<keyword id="KW-0479">Metal-binding</keyword>
<keyword id="KW-0597">Phosphoprotein</keyword>
<keyword id="KW-0653">Protein transport</keyword>
<keyword id="KW-1267">Proteomics identification</keyword>
<keyword id="KW-1185">Reference proteome</keyword>
<keyword id="KW-0813">Transport</keyword>
<keyword id="KW-0862">Zinc</keyword>
<keyword id="KW-0863">Zinc-finger</keyword>
<dbReference type="EMBL" id="AY009133">
    <property type="protein sequence ID" value="AAG33246.1"/>
    <property type="molecule type" value="mRNA"/>
</dbReference>
<dbReference type="EMBL" id="AK092312">
    <property type="protein sequence ID" value="BAC03860.1"/>
    <property type="status" value="ALT_INIT"/>
    <property type="molecule type" value="mRNA"/>
</dbReference>
<dbReference type="EMBL" id="AK301735">
    <property type="protein sequence ID" value="BAG63200.1"/>
    <property type="molecule type" value="mRNA"/>
</dbReference>
<dbReference type="EMBL" id="AC090954">
    <property type="status" value="NOT_ANNOTATED_CDS"/>
    <property type="molecule type" value="Genomic_DNA"/>
</dbReference>
<dbReference type="EMBL" id="BC106940">
    <property type="protein sequence ID" value="AAI06941.1"/>
    <property type="molecule type" value="mRNA"/>
</dbReference>
<dbReference type="EMBL" id="AB209673">
    <property type="protein sequence ID" value="BAD92910.1"/>
    <property type="status" value="ALT_INIT"/>
    <property type="molecule type" value="mRNA"/>
</dbReference>
<dbReference type="CCDS" id="CCDS2623.1">
    <molecule id="Q9H1K0-1"/>
</dbReference>
<dbReference type="RefSeq" id="NP_001289307.1">
    <molecule id="Q9H1K0-1"/>
    <property type="nucleotide sequence ID" value="NM_001302378.2"/>
</dbReference>
<dbReference type="RefSeq" id="NP_071735.2">
    <molecule id="Q9H1K0-1"/>
    <property type="nucleotide sequence ID" value="NM_022340.4"/>
</dbReference>
<dbReference type="RefSeq" id="XP_005265441.1">
    <molecule id="Q9H1K0-1"/>
    <property type="nucleotide sequence ID" value="XM_005265384.5"/>
</dbReference>
<dbReference type="RefSeq" id="XP_005265442.1">
    <molecule id="Q9H1K0-1"/>
    <property type="nucleotide sequence ID" value="XM_005265385.5"/>
</dbReference>
<dbReference type="RefSeq" id="XP_016862512.1">
    <molecule id="Q9H1K0-1"/>
    <property type="nucleotide sequence ID" value="XM_017007023.2"/>
</dbReference>
<dbReference type="RefSeq" id="XP_047304662.1">
    <molecule id="Q9H1K0-1"/>
    <property type="nucleotide sequence ID" value="XM_047448706.1"/>
</dbReference>
<dbReference type="RefSeq" id="XP_047304663.1">
    <molecule id="Q9H1K0-1"/>
    <property type="nucleotide sequence ID" value="XM_047448707.1"/>
</dbReference>
<dbReference type="RefSeq" id="XP_054203492.1">
    <molecule id="Q9H1K0-1"/>
    <property type="nucleotide sequence ID" value="XM_054347517.1"/>
</dbReference>
<dbReference type="RefSeq" id="XP_054203493.1">
    <molecule id="Q9H1K0-1"/>
    <property type="nucleotide sequence ID" value="XM_054347518.1"/>
</dbReference>
<dbReference type="RefSeq" id="XP_054203494.1">
    <molecule id="Q9H1K0-1"/>
    <property type="nucleotide sequence ID" value="XM_054347519.1"/>
</dbReference>
<dbReference type="RefSeq" id="XP_054203495.1">
    <molecule id="Q9H1K0-1"/>
    <property type="nucleotide sequence ID" value="XM_054347520.1"/>
</dbReference>
<dbReference type="RefSeq" id="XP_054203496.1">
    <molecule id="Q9H1K0-1"/>
    <property type="nucleotide sequence ID" value="XM_054347521.1"/>
</dbReference>
<dbReference type="PDB" id="1YZM">
    <property type="method" value="X-ray"/>
    <property type="resolution" value="1.50 A"/>
    <property type="chains" value="A=458-503"/>
</dbReference>
<dbReference type="PDB" id="1Z0J">
    <property type="method" value="X-ray"/>
    <property type="resolution" value="1.32 A"/>
    <property type="chains" value="B=728-784"/>
</dbReference>
<dbReference type="PDB" id="1Z0K">
    <property type="method" value="X-ray"/>
    <property type="resolution" value="1.92 A"/>
    <property type="chains" value="B/D=440-503"/>
</dbReference>
<dbReference type="PDBsum" id="1YZM"/>
<dbReference type="PDBsum" id="1Z0J"/>
<dbReference type="PDBsum" id="1Z0K"/>
<dbReference type="SMR" id="Q9H1K0"/>
<dbReference type="BioGRID" id="122084">
    <property type="interactions" value="67"/>
</dbReference>
<dbReference type="CORUM" id="Q9H1K0"/>
<dbReference type="ELM" id="Q9H1K0"/>
<dbReference type="FunCoup" id="Q9H1K0">
    <property type="interactions" value="3376"/>
</dbReference>
<dbReference type="IntAct" id="Q9H1K0">
    <property type="interactions" value="46"/>
</dbReference>
<dbReference type="MINT" id="Q9H1K0"/>
<dbReference type="STRING" id="9606.ENSP00000253699"/>
<dbReference type="GlyCosmos" id="Q9H1K0">
    <property type="glycosylation" value="1 site, 1 glycan"/>
</dbReference>
<dbReference type="GlyGen" id="Q9H1K0">
    <property type="glycosylation" value="2 sites, 1 O-linked glycan (2 sites)"/>
</dbReference>
<dbReference type="iPTMnet" id="Q9H1K0"/>
<dbReference type="PhosphoSitePlus" id="Q9H1K0"/>
<dbReference type="BioMuta" id="RBSN"/>
<dbReference type="DMDM" id="108935884"/>
<dbReference type="jPOST" id="Q9H1K0"/>
<dbReference type="MassIVE" id="Q9H1K0"/>
<dbReference type="PaxDb" id="9606-ENSP00000253699"/>
<dbReference type="PeptideAtlas" id="Q9H1K0"/>
<dbReference type="ProteomicsDB" id="5392"/>
<dbReference type="ProteomicsDB" id="80421">
    <molecule id="Q9H1K0-1"/>
</dbReference>
<dbReference type="Pumba" id="Q9H1K0"/>
<dbReference type="ABCD" id="Q9H1K0">
    <property type="antibodies" value="4 sequenced antibodies"/>
</dbReference>
<dbReference type="Antibodypedia" id="26666">
    <property type="antibodies" value="189 antibodies from 32 providers"/>
</dbReference>
<dbReference type="DNASU" id="64145"/>
<dbReference type="Ensembl" id="ENST00000253699.7">
    <molecule id="Q9H1K0-1"/>
    <property type="protein sequence ID" value="ENSP00000253699.3"/>
    <property type="gene ID" value="ENSG00000131381.13"/>
</dbReference>
<dbReference type="Ensembl" id="ENST00000476527.7">
    <molecule id="Q9H1K0-1"/>
    <property type="protein sequence ID" value="ENSP00000422551.1"/>
    <property type="gene ID" value="ENSG00000131381.13"/>
</dbReference>
<dbReference type="GeneID" id="64145"/>
<dbReference type="KEGG" id="hsa:64145"/>
<dbReference type="MANE-Select" id="ENST00000253699.7">
    <property type="protein sequence ID" value="ENSP00000253699.3"/>
    <property type="RefSeq nucleotide sequence ID" value="NM_022340.4"/>
    <property type="RefSeq protein sequence ID" value="NP_071735.2"/>
</dbReference>
<dbReference type="UCSC" id="uc003bzm.1">
    <molecule id="Q9H1K0-1"/>
    <property type="organism name" value="human"/>
</dbReference>
<dbReference type="AGR" id="HGNC:20759"/>
<dbReference type="CTD" id="64145"/>
<dbReference type="DisGeNET" id="64145"/>
<dbReference type="GeneCards" id="RBSN"/>
<dbReference type="HGNC" id="HGNC:20759">
    <property type="gene designation" value="RBSN"/>
</dbReference>
<dbReference type="HPA" id="ENSG00000131381">
    <property type="expression patterns" value="Low tissue specificity"/>
</dbReference>
<dbReference type="MalaCards" id="RBSN"/>
<dbReference type="MIM" id="609511">
    <property type="type" value="gene"/>
</dbReference>
<dbReference type="MIM" id="620937">
    <property type="type" value="phenotype"/>
</dbReference>
<dbReference type="MIM" id="620939">
    <property type="type" value="phenotype"/>
</dbReference>
<dbReference type="neXtProt" id="NX_Q9H1K0"/>
<dbReference type="OpenTargets" id="ENSG00000131381"/>
<dbReference type="Orphanet" id="675782">
    <property type="disease" value="Progressive hypotonia-intellectual disability-facial dysmorphism syndrome due to FYVE-defective RBSN"/>
</dbReference>
<dbReference type="Orphanet" id="675775">
    <property type="disease" value="Severe congenital myelofibrosis-pancytopenia-intellectual disability-neurologic and ophthalmic abnormalities syndrome"/>
</dbReference>
<dbReference type="PharmGKB" id="PA134959491"/>
<dbReference type="VEuPathDB" id="HostDB:ENSG00000131381"/>
<dbReference type="eggNOG" id="KOG1842">
    <property type="taxonomic scope" value="Eukaryota"/>
</dbReference>
<dbReference type="GeneTree" id="ENSGT00390000007159"/>
<dbReference type="HOGENOM" id="CLU_020798_2_0_1"/>
<dbReference type="InParanoid" id="Q9H1K0"/>
<dbReference type="OMA" id="QKMYEFI"/>
<dbReference type="OrthoDB" id="166134at2759"/>
<dbReference type="PAN-GO" id="Q9H1K0">
    <property type="GO annotations" value="0 GO annotations based on evolutionary models"/>
</dbReference>
<dbReference type="PhylomeDB" id="Q9H1K0"/>
<dbReference type="TreeFam" id="TF106125"/>
<dbReference type="PathwayCommons" id="Q9H1K0"/>
<dbReference type="Reactome" id="R-HSA-168138">
    <property type="pathway name" value="Toll Like Receptor 9 (TLR9) Cascade"/>
</dbReference>
<dbReference type="Reactome" id="R-HSA-983231">
    <property type="pathway name" value="Factors involved in megakaryocyte development and platelet production"/>
</dbReference>
<dbReference type="SignaLink" id="Q9H1K0"/>
<dbReference type="SIGNOR" id="Q9H1K0"/>
<dbReference type="BioGRID-ORCS" id="64145">
    <property type="hits" value="192 hits in 1169 CRISPR screens"/>
</dbReference>
<dbReference type="ChiTaRS" id="RBSN">
    <property type="organism name" value="human"/>
</dbReference>
<dbReference type="EvolutionaryTrace" id="Q9H1K0"/>
<dbReference type="GeneWiki" id="ZFYVE20"/>
<dbReference type="GenomeRNAi" id="64145"/>
<dbReference type="Pharos" id="Q9H1K0">
    <property type="development level" value="Tbio"/>
</dbReference>
<dbReference type="PRO" id="PR:Q9H1K0"/>
<dbReference type="Proteomes" id="UP000005640">
    <property type="component" value="Chromosome 3"/>
</dbReference>
<dbReference type="RNAct" id="Q9H1K0">
    <property type="molecule type" value="protein"/>
</dbReference>
<dbReference type="Bgee" id="ENSG00000131381">
    <property type="expression patterns" value="Expressed in endothelial cell and 191 other cell types or tissues"/>
</dbReference>
<dbReference type="ExpressionAtlas" id="Q9H1K0">
    <property type="expression patterns" value="baseline and differential"/>
</dbReference>
<dbReference type="GO" id="GO:0005829">
    <property type="term" value="C:cytosol"/>
    <property type="evidence" value="ECO:0007669"/>
    <property type="project" value="GOC"/>
</dbReference>
<dbReference type="GO" id="GO:0005769">
    <property type="term" value="C:early endosome"/>
    <property type="evidence" value="ECO:0000314"/>
    <property type="project" value="UniProtKB"/>
</dbReference>
<dbReference type="GO" id="GO:0031901">
    <property type="term" value="C:early endosome membrane"/>
    <property type="evidence" value="ECO:0007669"/>
    <property type="project" value="UniProtKB-SubCell"/>
</dbReference>
<dbReference type="GO" id="GO:0005768">
    <property type="term" value="C:endosome"/>
    <property type="evidence" value="ECO:0000303"/>
    <property type="project" value="UniProtKB"/>
</dbReference>
<dbReference type="GO" id="GO:0010008">
    <property type="term" value="C:endosome membrane"/>
    <property type="evidence" value="ECO:0000304"/>
    <property type="project" value="Reactome"/>
</dbReference>
<dbReference type="GO" id="GO:0070062">
    <property type="term" value="C:extracellular exosome"/>
    <property type="evidence" value="ECO:0007005"/>
    <property type="project" value="UniProtKB"/>
</dbReference>
<dbReference type="GO" id="GO:0043231">
    <property type="term" value="C:intracellular membrane-bounded organelle"/>
    <property type="evidence" value="ECO:0000314"/>
    <property type="project" value="HPA"/>
</dbReference>
<dbReference type="GO" id="GO:0005886">
    <property type="term" value="C:plasma membrane"/>
    <property type="evidence" value="ECO:0007669"/>
    <property type="project" value="UniProtKB-SubCell"/>
</dbReference>
<dbReference type="GO" id="GO:0032266">
    <property type="term" value="F:phosphatidylinositol-3-phosphate binding"/>
    <property type="evidence" value="ECO:0000314"/>
    <property type="project" value="UniProtKB"/>
</dbReference>
<dbReference type="GO" id="GO:0031267">
    <property type="term" value="F:small GTPase binding"/>
    <property type="evidence" value="ECO:0007669"/>
    <property type="project" value="Ensembl"/>
</dbReference>
<dbReference type="GO" id="GO:0008270">
    <property type="term" value="F:zinc ion binding"/>
    <property type="evidence" value="ECO:0000303"/>
    <property type="project" value="UniProtKB"/>
</dbReference>
<dbReference type="GO" id="GO:0034498">
    <property type="term" value="P:early endosome to Golgi transport"/>
    <property type="evidence" value="ECO:0000315"/>
    <property type="project" value="UniProtKB"/>
</dbReference>
<dbReference type="GO" id="GO:0016197">
    <property type="term" value="P:endosomal transport"/>
    <property type="evidence" value="ECO:0000303"/>
    <property type="project" value="UniProtKB"/>
</dbReference>
<dbReference type="GO" id="GO:0090160">
    <property type="term" value="P:Golgi to lysosome transport"/>
    <property type="evidence" value="ECO:0000315"/>
    <property type="project" value="UniProtKB"/>
</dbReference>
<dbReference type="GO" id="GO:0015031">
    <property type="term" value="P:protein transport"/>
    <property type="evidence" value="ECO:0007669"/>
    <property type="project" value="UniProtKB-KW"/>
</dbReference>
<dbReference type="GO" id="GO:1903358">
    <property type="term" value="P:regulation of Golgi organization"/>
    <property type="evidence" value="ECO:0000315"/>
    <property type="project" value="UniProtKB"/>
</dbReference>
<dbReference type="CDD" id="cd15716">
    <property type="entry name" value="FYVE_RBNS5"/>
    <property type="match status" value="1"/>
</dbReference>
<dbReference type="FunFam" id="4.10.860.20:FF:000002">
    <property type="entry name" value="rabenosyn-5 isoform X1"/>
    <property type="match status" value="1"/>
</dbReference>
<dbReference type="FunFam" id="4.10.860.20:FF:000003">
    <property type="entry name" value="rabenosyn-5 isoform X1"/>
    <property type="match status" value="1"/>
</dbReference>
<dbReference type="Gene3D" id="4.10.860.20">
    <property type="entry name" value="Rabenosyn, Rab binding domain"/>
    <property type="match status" value="2"/>
</dbReference>
<dbReference type="Gene3D" id="3.30.40.10">
    <property type="entry name" value="Zinc/RING finger domain, C3HC4 (zinc finger)"/>
    <property type="match status" value="1"/>
</dbReference>
<dbReference type="InterPro" id="IPR052727">
    <property type="entry name" value="Rab4/Rab5_effector"/>
</dbReference>
<dbReference type="InterPro" id="IPR021565">
    <property type="entry name" value="Rbsn_Rab-bd"/>
</dbReference>
<dbReference type="InterPro" id="IPR036531">
    <property type="entry name" value="Rbsn_Rab-bd_sf"/>
</dbReference>
<dbReference type="InterPro" id="IPR013087">
    <property type="entry name" value="Znf_C2H2_type"/>
</dbReference>
<dbReference type="InterPro" id="IPR000306">
    <property type="entry name" value="Znf_FYVE"/>
</dbReference>
<dbReference type="InterPro" id="IPR017455">
    <property type="entry name" value="Znf_FYVE-rel"/>
</dbReference>
<dbReference type="InterPro" id="IPR011011">
    <property type="entry name" value="Znf_FYVE_PHD"/>
</dbReference>
<dbReference type="InterPro" id="IPR013083">
    <property type="entry name" value="Znf_RING/FYVE/PHD"/>
</dbReference>
<dbReference type="PANTHER" id="PTHR13510">
    <property type="entry name" value="FYVE-FINGER-CONTAINING RAB5 EFFECTOR PROTEIN RABENOSYN-5-RELATED"/>
    <property type="match status" value="1"/>
</dbReference>
<dbReference type="PANTHER" id="PTHR13510:SF44">
    <property type="entry name" value="RABENOSYN-5"/>
    <property type="match status" value="1"/>
</dbReference>
<dbReference type="Pfam" id="PF01363">
    <property type="entry name" value="FYVE"/>
    <property type="match status" value="1"/>
</dbReference>
<dbReference type="Pfam" id="PF16601">
    <property type="entry name" value="NPF"/>
    <property type="match status" value="1"/>
</dbReference>
<dbReference type="Pfam" id="PF11464">
    <property type="entry name" value="Rbsn"/>
    <property type="match status" value="2"/>
</dbReference>
<dbReference type="SMART" id="SM00064">
    <property type="entry name" value="FYVE"/>
    <property type="match status" value="1"/>
</dbReference>
<dbReference type="SUPFAM" id="SSF57903">
    <property type="entry name" value="FYVE/PHD zinc finger"/>
    <property type="match status" value="1"/>
</dbReference>
<dbReference type="SUPFAM" id="SSF140125">
    <property type="entry name" value="Rabenosyn-5 Rab-binding domain-like"/>
    <property type="match status" value="2"/>
</dbReference>
<dbReference type="PROSITE" id="PS50178">
    <property type="entry name" value="ZF_FYVE"/>
    <property type="match status" value="1"/>
</dbReference>
<dbReference type="PROSITE" id="PS00028">
    <property type="entry name" value="ZINC_FINGER_C2H2_1"/>
    <property type="match status" value="1"/>
</dbReference>
<dbReference type="PROSITE" id="PS50157">
    <property type="entry name" value="ZINC_FINGER_C2H2_2"/>
    <property type="match status" value="1"/>
</dbReference>
<organism>
    <name type="scientific">Homo sapiens</name>
    <name type="common">Human</name>
    <dbReference type="NCBI Taxonomy" id="9606"/>
    <lineage>
        <taxon>Eukaryota</taxon>
        <taxon>Metazoa</taxon>
        <taxon>Chordata</taxon>
        <taxon>Craniata</taxon>
        <taxon>Vertebrata</taxon>
        <taxon>Euteleostomi</taxon>
        <taxon>Mammalia</taxon>
        <taxon>Eutheria</taxon>
        <taxon>Euarchontoglires</taxon>
        <taxon>Primates</taxon>
        <taxon>Haplorrhini</taxon>
        <taxon>Catarrhini</taxon>
        <taxon>Hominidae</taxon>
        <taxon>Homo</taxon>
    </lineage>
</organism>
<protein>
    <recommendedName>
        <fullName evidence="15">Rabenosyn-5</fullName>
    </recommendedName>
    <alternativeName>
        <fullName>110 kDa protein</fullName>
    </alternativeName>
    <alternativeName>
        <fullName>FYVE finger-containing Rab5 effector protein rabenosyn-5</fullName>
    </alternativeName>
    <alternativeName>
        <fullName evidence="18">RAB effector RBSN</fullName>
    </alternativeName>
    <alternativeName>
        <fullName>Zinc finger FYVE domain-containing protein 20</fullName>
    </alternativeName>
</protein>
<evidence type="ECO:0000250" key="1">
    <source>
        <dbReference type="UniProtKB" id="Q80Y56"/>
    </source>
</evidence>
<evidence type="ECO:0000255" key="2"/>
<evidence type="ECO:0000255" key="3">
    <source>
        <dbReference type="PROSITE-ProRule" id="PRU00042"/>
    </source>
</evidence>
<evidence type="ECO:0000255" key="4">
    <source>
        <dbReference type="PROSITE-ProRule" id="PRU00091"/>
    </source>
</evidence>
<evidence type="ECO:0000256" key="5">
    <source>
        <dbReference type="SAM" id="MobiDB-lite"/>
    </source>
</evidence>
<evidence type="ECO:0000269" key="6">
    <source>
    </source>
</evidence>
<evidence type="ECO:0000269" key="7">
    <source>
    </source>
</evidence>
<evidence type="ECO:0000269" key="8">
    <source>
    </source>
</evidence>
<evidence type="ECO:0000269" key="9">
    <source>
    </source>
</evidence>
<evidence type="ECO:0000269" key="10">
    <source>
    </source>
</evidence>
<evidence type="ECO:0000269" key="11">
    <source>
    </source>
</evidence>
<evidence type="ECO:0000269" key="12">
    <source>
    </source>
</evidence>
<evidence type="ECO:0000269" key="13">
    <source>
    </source>
</evidence>
<evidence type="ECO:0000269" key="14">
    <source>
    </source>
</evidence>
<evidence type="ECO:0000303" key="15">
    <source>
    </source>
</evidence>
<evidence type="ECO:0000303" key="16">
    <source>
    </source>
</evidence>
<evidence type="ECO:0000305" key="17"/>
<evidence type="ECO:0000312" key="18">
    <source>
        <dbReference type="HGNC" id="HGNC:20759"/>
    </source>
</evidence>
<evidence type="ECO:0007744" key="19">
    <source>
    </source>
</evidence>
<evidence type="ECO:0007744" key="20">
    <source>
    </source>
</evidence>
<evidence type="ECO:0007744" key="21">
    <source>
    </source>
</evidence>
<evidence type="ECO:0007829" key="22">
    <source>
        <dbReference type="PDB" id="1YZM"/>
    </source>
</evidence>
<evidence type="ECO:0007829" key="23">
    <source>
        <dbReference type="PDB" id="1Z0J"/>
    </source>
</evidence>
<gene>
    <name evidence="18" type="primary">RBSN</name>
    <name evidence="18" type="synonym">ZFYVE20</name>
</gene>
<reference key="1">
    <citation type="journal article" date="2000" name="J. Cell Biol.">
        <title>Rabenosyn-5, a novel Rab5 effector, is complexed with hVPS45 and recruited to endosomes through a FYVE finger domain.</title>
        <authorList>
            <person name="Nielsen E."/>
            <person name="Christoforidis S."/>
            <person name="Uttenweiler-Joseph S."/>
            <person name="Miaczynska M."/>
            <person name="Dewitte F."/>
            <person name="Wilm M."/>
            <person name="Hoflack B."/>
            <person name="Zerial M."/>
        </authorList>
    </citation>
    <scope>NUCLEOTIDE SEQUENCE [MRNA] (ISOFORM 1)</scope>
    <scope>FUNCTION IN ENDOSOMAL RECYCLING</scope>
    <scope>INTERACTION WITH PTDINSP3; GTP-BOUND RAB5A AND VPS45A</scope>
    <scope>SUBCELLULAR LOCATION</scope>
    <source>
        <tissue>Cervix carcinoma</tissue>
    </source>
</reference>
<reference key="2">
    <citation type="journal article" date="2004" name="Nat. Genet.">
        <title>Complete sequencing and characterization of 21,243 full-length human cDNAs.</title>
        <authorList>
            <person name="Ota T."/>
            <person name="Suzuki Y."/>
            <person name="Nishikawa T."/>
            <person name="Otsuki T."/>
            <person name="Sugiyama T."/>
            <person name="Irie R."/>
            <person name="Wakamatsu A."/>
            <person name="Hayashi K."/>
            <person name="Sato H."/>
            <person name="Nagai K."/>
            <person name="Kimura K."/>
            <person name="Makita H."/>
            <person name="Sekine M."/>
            <person name="Obayashi M."/>
            <person name="Nishi T."/>
            <person name="Shibahara T."/>
            <person name="Tanaka T."/>
            <person name="Ishii S."/>
            <person name="Yamamoto J."/>
            <person name="Saito K."/>
            <person name="Kawai Y."/>
            <person name="Isono Y."/>
            <person name="Nakamura Y."/>
            <person name="Nagahari K."/>
            <person name="Murakami K."/>
            <person name="Yasuda T."/>
            <person name="Iwayanagi T."/>
            <person name="Wagatsuma M."/>
            <person name="Shiratori A."/>
            <person name="Sudo H."/>
            <person name="Hosoiri T."/>
            <person name="Kaku Y."/>
            <person name="Kodaira H."/>
            <person name="Kondo H."/>
            <person name="Sugawara M."/>
            <person name="Takahashi M."/>
            <person name="Kanda K."/>
            <person name="Yokoi T."/>
            <person name="Furuya T."/>
            <person name="Kikkawa E."/>
            <person name="Omura Y."/>
            <person name="Abe K."/>
            <person name="Kamihara K."/>
            <person name="Katsuta N."/>
            <person name="Sato K."/>
            <person name="Tanikawa M."/>
            <person name="Yamazaki M."/>
            <person name="Ninomiya K."/>
            <person name="Ishibashi T."/>
            <person name="Yamashita H."/>
            <person name="Murakawa K."/>
            <person name="Fujimori K."/>
            <person name="Tanai H."/>
            <person name="Kimata M."/>
            <person name="Watanabe M."/>
            <person name="Hiraoka S."/>
            <person name="Chiba Y."/>
            <person name="Ishida S."/>
            <person name="Ono Y."/>
            <person name="Takiguchi S."/>
            <person name="Watanabe S."/>
            <person name="Yosida M."/>
            <person name="Hotuta T."/>
            <person name="Kusano J."/>
            <person name="Kanehori K."/>
            <person name="Takahashi-Fujii A."/>
            <person name="Hara H."/>
            <person name="Tanase T.-O."/>
            <person name="Nomura Y."/>
            <person name="Togiya S."/>
            <person name="Komai F."/>
            <person name="Hara R."/>
            <person name="Takeuchi K."/>
            <person name="Arita M."/>
            <person name="Imose N."/>
            <person name="Musashino K."/>
            <person name="Yuuki H."/>
            <person name="Oshima A."/>
            <person name="Sasaki N."/>
            <person name="Aotsuka S."/>
            <person name="Yoshikawa Y."/>
            <person name="Matsunawa H."/>
            <person name="Ichihara T."/>
            <person name="Shiohata N."/>
            <person name="Sano S."/>
            <person name="Moriya S."/>
            <person name="Momiyama H."/>
            <person name="Satoh N."/>
            <person name="Takami S."/>
            <person name="Terashima Y."/>
            <person name="Suzuki O."/>
            <person name="Nakagawa S."/>
            <person name="Senoh A."/>
            <person name="Mizoguchi H."/>
            <person name="Goto Y."/>
            <person name="Shimizu F."/>
            <person name="Wakebe H."/>
            <person name="Hishigaki H."/>
            <person name="Watanabe T."/>
            <person name="Sugiyama A."/>
            <person name="Takemoto M."/>
            <person name="Kawakami B."/>
            <person name="Yamazaki M."/>
            <person name="Watanabe K."/>
            <person name="Kumagai A."/>
            <person name="Itakura S."/>
            <person name="Fukuzumi Y."/>
            <person name="Fujimori Y."/>
            <person name="Komiyama M."/>
            <person name="Tashiro H."/>
            <person name="Tanigami A."/>
            <person name="Fujiwara T."/>
            <person name="Ono T."/>
            <person name="Yamada K."/>
            <person name="Fujii Y."/>
            <person name="Ozaki K."/>
            <person name="Hirao M."/>
            <person name="Ohmori Y."/>
            <person name="Kawabata A."/>
            <person name="Hikiji T."/>
            <person name="Kobatake N."/>
            <person name="Inagaki H."/>
            <person name="Ikema Y."/>
            <person name="Okamoto S."/>
            <person name="Okitani R."/>
            <person name="Kawakami T."/>
            <person name="Noguchi S."/>
            <person name="Itoh T."/>
            <person name="Shigeta K."/>
            <person name="Senba T."/>
            <person name="Matsumura K."/>
            <person name="Nakajima Y."/>
            <person name="Mizuno T."/>
            <person name="Morinaga M."/>
            <person name="Sasaki M."/>
            <person name="Togashi T."/>
            <person name="Oyama M."/>
            <person name="Hata H."/>
            <person name="Watanabe M."/>
            <person name="Komatsu T."/>
            <person name="Mizushima-Sugano J."/>
            <person name="Satoh T."/>
            <person name="Shirai Y."/>
            <person name="Takahashi Y."/>
            <person name="Nakagawa K."/>
            <person name="Okumura K."/>
            <person name="Nagase T."/>
            <person name="Nomura N."/>
            <person name="Kikuchi H."/>
            <person name="Masuho Y."/>
            <person name="Yamashita R."/>
            <person name="Nakai K."/>
            <person name="Yada T."/>
            <person name="Nakamura Y."/>
            <person name="Ohara O."/>
            <person name="Isogai T."/>
            <person name="Sugano S."/>
        </authorList>
    </citation>
    <scope>NUCLEOTIDE SEQUENCE [LARGE SCALE MRNA] (ISOFORM 2)</scope>
    <scope>NUCLEOTIDE SEQUENCE [LARGE SCALE MRNA] OF 501-784 (ISOFORM 1)</scope>
    <source>
        <tissue>Brain</tissue>
        <tissue>Testis</tissue>
    </source>
</reference>
<reference key="3">
    <citation type="journal article" date="2006" name="Nature">
        <title>The DNA sequence, annotation and analysis of human chromosome 3.</title>
        <authorList>
            <person name="Muzny D.M."/>
            <person name="Scherer S.E."/>
            <person name="Kaul R."/>
            <person name="Wang J."/>
            <person name="Yu J."/>
            <person name="Sudbrak R."/>
            <person name="Buhay C.J."/>
            <person name="Chen R."/>
            <person name="Cree A."/>
            <person name="Ding Y."/>
            <person name="Dugan-Rocha S."/>
            <person name="Gill R."/>
            <person name="Gunaratne P."/>
            <person name="Harris R.A."/>
            <person name="Hawes A.C."/>
            <person name="Hernandez J."/>
            <person name="Hodgson A.V."/>
            <person name="Hume J."/>
            <person name="Jackson A."/>
            <person name="Khan Z.M."/>
            <person name="Kovar-Smith C."/>
            <person name="Lewis L.R."/>
            <person name="Lozado R.J."/>
            <person name="Metzker M.L."/>
            <person name="Milosavljevic A."/>
            <person name="Miner G.R."/>
            <person name="Morgan M.B."/>
            <person name="Nazareth L.V."/>
            <person name="Scott G."/>
            <person name="Sodergren E."/>
            <person name="Song X.-Z."/>
            <person name="Steffen D."/>
            <person name="Wei S."/>
            <person name="Wheeler D.A."/>
            <person name="Wright M.W."/>
            <person name="Worley K.C."/>
            <person name="Yuan Y."/>
            <person name="Zhang Z."/>
            <person name="Adams C.Q."/>
            <person name="Ansari-Lari M.A."/>
            <person name="Ayele M."/>
            <person name="Brown M.J."/>
            <person name="Chen G."/>
            <person name="Chen Z."/>
            <person name="Clendenning J."/>
            <person name="Clerc-Blankenburg K.P."/>
            <person name="Chen R."/>
            <person name="Chen Z."/>
            <person name="Davis C."/>
            <person name="Delgado O."/>
            <person name="Dinh H.H."/>
            <person name="Dong W."/>
            <person name="Draper H."/>
            <person name="Ernst S."/>
            <person name="Fu G."/>
            <person name="Gonzalez-Garay M.L."/>
            <person name="Garcia D.K."/>
            <person name="Gillett W."/>
            <person name="Gu J."/>
            <person name="Hao B."/>
            <person name="Haugen E."/>
            <person name="Havlak P."/>
            <person name="He X."/>
            <person name="Hennig S."/>
            <person name="Hu S."/>
            <person name="Huang W."/>
            <person name="Jackson L.R."/>
            <person name="Jacob L.S."/>
            <person name="Kelly S.H."/>
            <person name="Kube M."/>
            <person name="Levy R."/>
            <person name="Li Z."/>
            <person name="Liu B."/>
            <person name="Liu J."/>
            <person name="Liu W."/>
            <person name="Lu J."/>
            <person name="Maheshwari M."/>
            <person name="Nguyen B.-V."/>
            <person name="Okwuonu G.O."/>
            <person name="Palmeiri A."/>
            <person name="Pasternak S."/>
            <person name="Perez L.M."/>
            <person name="Phelps K.A."/>
            <person name="Plopper F.J."/>
            <person name="Qiang B."/>
            <person name="Raymond C."/>
            <person name="Rodriguez R."/>
            <person name="Saenphimmachak C."/>
            <person name="Santibanez J."/>
            <person name="Shen H."/>
            <person name="Shen Y."/>
            <person name="Subramanian S."/>
            <person name="Tabor P.E."/>
            <person name="Verduzco D."/>
            <person name="Waldron L."/>
            <person name="Wang J."/>
            <person name="Wang J."/>
            <person name="Wang Q."/>
            <person name="Williams G.A."/>
            <person name="Wong G.K.-S."/>
            <person name="Yao Z."/>
            <person name="Zhang J."/>
            <person name="Zhang X."/>
            <person name="Zhao G."/>
            <person name="Zhou J."/>
            <person name="Zhou Y."/>
            <person name="Nelson D."/>
            <person name="Lehrach H."/>
            <person name="Reinhardt R."/>
            <person name="Naylor S.L."/>
            <person name="Yang H."/>
            <person name="Olson M."/>
            <person name="Weinstock G."/>
            <person name="Gibbs R.A."/>
        </authorList>
    </citation>
    <scope>NUCLEOTIDE SEQUENCE [LARGE SCALE GENOMIC DNA]</scope>
</reference>
<reference key="4">
    <citation type="journal article" date="2004" name="Genome Res.">
        <title>The status, quality, and expansion of the NIH full-length cDNA project: the Mammalian Gene Collection (MGC).</title>
        <authorList>
            <consortium name="The MGC Project Team"/>
        </authorList>
    </citation>
    <scope>NUCLEOTIDE SEQUENCE [LARGE SCALE MRNA] (ISOFORM 1)</scope>
</reference>
<reference key="5">
    <citation type="submission" date="2005-03" db="EMBL/GenBank/DDBJ databases">
        <authorList>
            <person name="Totoki Y."/>
            <person name="Toyoda A."/>
            <person name="Takeda T."/>
            <person name="Sakaki Y."/>
            <person name="Tanaka A."/>
            <person name="Yokoyama S."/>
            <person name="Ohara O."/>
            <person name="Nagase T."/>
            <person name="Kikuno R.F."/>
        </authorList>
    </citation>
    <scope>NUCLEOTIDE SEQUENCE [LARGE SCALE MRNA] OF 1-755 (ISOFORM 1)</scope>
    <source>
        <tissue>Brain</tissue>
    </source>
</reference>
<reference key="6">
    <citation type="journal article" date="2002" name="Nat. Cell Biol.">
        <title>Divalent Rab effectors regulate the sub-compartmental organization and sorting of early endosomes.</title>
        <authorList>
            <person name="de Renzis S."/>
            <person name="Soennichsen B."/>
            <person name="Zerial M."/>
        </authorList>
    </citation>
    <scope>FUNCTION IN ENDOSOMAL RECYCLING</scope>
    <scope>INTERACTION WITH RAB4A AND RAB5A</scope>
    <scope>SUBCELLULAR LOCATION</scope>
</reference>
<reference key="7">
    <citation type="journal article" date="2004" name="Mol. Biol. Cell">
        <title>Rabenosyn-5 and EHD1 interact and sequentially regulate protein recycling to the plasma membrane.</title>
        <authorList>
            <person name="Naslavsky N."/>
            <person name="Boehm M."/>
            <person name="Backlund P.S. Jr."/>
            <person name="Caplan S."/>
        </authorList>
    </citation>
    <scope>FUNCTION IN ENDOSOMAL RECYCLING</scope>
    <scope>INTERACTION WITH EHD1</scope>
    <scope>MUTAGENESIS OF 626-ASN--PHE-628 AND 662-ASN--PHE-664</scope>
    <scope>SUBCELLULAR LOCATION</scope>
</reference>
<reference key="8">
    <citation type="journal article" date="2008" name="J. Proteome Res.">
        <title>Combining protein-based IMAC, peptide-based IMAC, and MudPIT for efficient phosphoproteomic analysis.</title>
        <authorList>
            <person name="Cantin G.T."/>
            <person name="Yi W."/>
            <person name="Lu B."/>
            <person name="Park S.K."/>
            <person name="Xu T."/>
            <person name="Lee J.-D."/>
            <person name="Yates J.R. III"/>
        </authorList>
    </citation>
    <scope>IDENTIFICATION BY MASS SPECTROMETRY [LARGE SCALE ANALYSIS]</scope>
    <source>
        <tissue>Cervix carcinoma</tissue>
    </source>
</reference>
<reference key="9">
    <citation type="journal article" date="2010" name="PLoS Biol.">
        <title>Neuron specific Rab4 effector GRASP-1 coordinates membrane specialization and maturation of recycling endosomes.</title>
        <authorList>
            <person name="Hoogenraad C.C."/>
            <person name="Popa I."/>
            <person name="Futai K."/>
            <person name="Martinez-Sanchez E."/>
            <person name="Sanchez-Martinez E."/>
            <person name="Wulf P.S."/>
            <person name="van Vlijmen T."/>
            <person name="Dortland B.R."/>
            <person name="Oorschot V."/>
            <person name="Govers R."/>
            <person name="Monti M."/>
            <person name="Heck A.J."/>
            <person name="Sheng M."/>
            <person name="Klumperman J."/>
            <person name="Rehmann H."/>
            <person name="Jaarsma D."/>
            <person name="Kapitein L.C."/>
            <person name="van der Sluijs P."/>
        </authorList>
    </citation>
    <scope>INTERACTION WITH RAB4A</scope>
</reference>
<reference key="10">
    <citation type="journal article" date="2012" name="Proc. Natl. Acad. Sci. U.S.A.">
        <title>N-terminal acetylome analyses and functional insights of the N-terminal acetyltransferase NatB.</title>
        <authorList>
            <person name="Van Damme P."/>
            <person name="Lasa M."/>
            <person name="Polevoda B."/>
            <person name="Gazquez C."/>
            <person name="Elosegui-Artola A."/>
            <person name="Kim D.S."/>
            <person name="De Juan-Pardo E."/>
            <person name="Demeyer K."/>
            <person name="Hole K."/>
            <person name="Larrea E."/>
            <person name="Timmerman E."/>
            <person name="Prieto J."/>
            <person name="Arnesen T."/>
            <person name="Sherman F."/>
            <person name="Gevaert K."/>
            <person name="Aldabe R."/>
        </authorList>
    </citation>
    <scope>ACETYLATION [LARGE SCALE ANALYSIS] AT ALA-2</scope>
    <scope>CLEAVAGE OF INITIATOR METHIONINE [LARGE SCALE ANALYSIS]</scope>
    <scope>IDENTIFICATION BY MASS SPECTROMETRY [LARGE SCALE ANALYSIS]</scope>
</reference>
<reference key="11">
    <citation type="journal article" date="2012" name="Proc. Natl. Acad. Sci. U.S.A.">
        <title>Rabenosyn-5 defines the fate of the transferrin receptor following clathrin-mediated endocytosis.</title>
        <authorList>
            <person name="Navaroli D.M."/>
            <person name="Bellve K.D."/>
            <person name="Standley C."/>
            <person name="Lifshitz L.M."/>
            <person name="Cardia J."/>
            <person name="Lambright D."/>
            <person name="Leonard D."/>
            <person name="Fogarty K.E."/>
            <person name="Corvera S."/>
        </authorList>
    </citation>
    <scope>FUNCTION</scope>
    <scope>SUBCELLULAR LOCATION</scope>
</reference>
<reference key="12">
    <citation type="journal article" date="2013" name="J. Proteome Res.">
        <title>Toward a comprehensive characterization of a human cancer cell phosphoproteome.</title>
        <authorList>
            <person name="Zhou H."/>
            <person name="Di Palma S."/>
            <person name="Preisinger C."/>
            <person name="Peng M."/>
            <person name="Polat A.N."/>
            <person name="Heck A.J."/>
            <person name="Mohammed S."/>
        </authorList>
    </citation>
    <scope>PHOSPHORYLATION [LARGE SCALE ANALYSIS] AT SER-3; SER-219; SER-226 AND SER-230</scope>
    <scope>IDENTIFICATION BY MASS SPECTROMETRY [LARGE SCALE ANALYSIS]</scope>
    <source>
        <tissue>Cervix carcinoma</tissue>
        <tissue>Erythroleukemia</tissue>
    </source>
</reference>
<reference key="13">
    <citation type="journal article" date="2014" name="J. Proteomics">
        <title>An enzyme assisted RP-RPLC approach for in-depth analysis of human liver phosphoproteome.</title>
        <authorList>
            <person name="Bian Y."/>
            <person name="Song C."/>
            <person name="Cheng K."/>
            <person name="Dong M."/>
            <person name="Wang F."/>
            <person name="Huang J."/>
            <person name="Sun D."/>
            <person name="Wang L."/>
            <person name="Ye M."/>
            <person name="Zou H."/>
        </authorList>
    </citation>
    <scope>PHOSPHORYLATION [LARGE SCALE ANALYSIS] AT SER-684</scope>
    <scope>IDENTIFICATION BY MASS SPECTROMETRY [LARGE SCALE ANALYSIS]</scope>
    <source>
        <tissue>Liver</tissue>
    </source>
</reference>
<reference key="14">
    <citation type="journal article" date="2005" name="Nature">
        <title>Structural basis of family-wide Rab GTPase recognition by rabenosyn-5.</title>
        <authorList>
            <person name="Eathiraj S."/>
            <person name="Pan X."/>
            <person name="Ritacco C."/>
            <person name="Lambright D.G."/>
        </authorList>
    </citation>
    <scope>X-RAY CRYSTALLOGRAPHY (1.32 ANGSTROMS) OF 458-503 AND 728-784 IN COMPLEX WITH RAB22A</scope>
    <scope>INTERACTION WITH RAB4A; RAB5A; RAB14; RAB22A AND RAB24</scope>
</reference>
<reference key="15">
    <citation type="journal article" date="2014" name="Orphanet J. Rare Dis.">
        <title>Single point mutation in Rabenosyn-5 in a female with intractable seizures and evidence of defective endocytotic trafficking.</title>
        <authorList>
            <person name="Stockler S."/>
            <person name="Corvera S."/>
            <person name="Lambright D."/>
            <person name="Fogarty K."/>
            <person name="Nosova E."/>
            <person name="Leonard D."/>
            <person name="Steinfeld R."/>
            <person name="Ackerley C."/>
            <person name="Shyr C."/>
            <person name="Au N."/>
            <person name="Selby K."/>
            <person name="van Allen M."/>
            <person name="Vallance H."/>
            <person name="Wevers R."/>
            <person name="Watkins D."/>
            <person name="Rosenblatt D."/>
            <person name="Ross C.J."/>
            <person name="Conibear E."/>
            <person name="Wasserman W."/>
            <person name="van Karnebeek C."/>
        </authorList>
    </citation>
    <scope>VARIANT ARG-425</scope>
</reference>
<reference key="16">
    <citation type="journal article" date="2018" name="Blood">
        <title>Syndromic congenital myelofibrosis associated with a loss-of-function variant in RBSN.</title>
        <authorList>
            <person name="Magoulas P.L."/>
            <person name="Shchelochkov O.A."/>
            <person name="Bainbridge M.N."/>
            <person name="Ben-Shachar S."/>
            <person name="Yatsenko S."/>
            <person name="Potocki L."/>
            <person name="Lewis R.A."/>
            <person name="Searby C."/>
            <person name="Marcogliese A.N."/>
            <person name="Elghetany M.T."/>
            <person name="Zapata G."/>
            <person name="Hernandez P.P."/>
            <person name="Gadkari M."/>
            <person name="Einhaus D."/>
            <person name="Muzny D.M."/>
            <person name="Gibbs R.A."/>
            <person name="Bertuch A.A."/>
            <person name="Scott D.A."/>
            <person name="Corvera S."/>
            <person name="Franco L.M."/>
        </authorList>
    </citation>
    <scope>INVOLVEMENT IN MFANDO</scope>
    <scope>VARIANT MFANDO ARG-97</scope>
    <scope>CHARACTERIZATION OF VARIANT MFANDO ARG-97</scope>
</reference>
<reference key="17">
    <citation type="journal article" date="2022" name="Hum. Mol. Genet.">
        <title>RABENOSYN separation-of-function mutations uncouple endosomal recycling from lysosomal degradation, causing a distinct Mendelian disorder.</title>
        <authorList>
            <person name="Paul F."/>
            <person name="Ng C."/>
            <person name="Mohamad Sahari U.B."/>
            <person name="Nafissi S."/>
            <person name="Nilipoor Y."/>
            <person name="Tavasoli A.R."/>
            <person name="Bonnard C."/>
            <person name="Wong P.M."/>
            <person name="Nabavizadeh N."/>
            <person name="Altunoglu U."/>
            <person name="Estiar M.A."/>
            <person name="Majoie C.B."/>
            <person name="Lee H."/>
            <person name="Nelson S.F."/>
            <person name="Gan-Or Z."/>
            <person name="Rouleau G.A."/>
            <person name="Van Veldhoven P.P."/>
            <person name="Massie R."/>
            <person name="Hennekam R.C."/>
            <person name="Kariminejad A."/>
            <person name="Reversade B."/>
        </authorList>
    </citation>
    <scope>INVOLVEMENT IN KAREVS</scope>
    <scope>VARIANTS KAREVS GLY-180 AND ARG-183</scope>
    <scope>CHARACTERIZATION OF VARIANT KAREVS ARG-183</scope>
    <scope>SUBCELLULAR LOCATION</scope>
</reference>
<feature type="initiator methionine" description="Removed" evidence="19">
    <location>
        <position position="1"/>
    </location>
</feature>
<feature type="chain" id="PRO_0000098711" description="Rabenosyn-5">
    <location>
        <begin position="2"/>
        <end position="784"/>
    </location>
</feature>
<feature type="domain" description="UIM" evidence="17">
    <location>
        <begin position="496"/>
        <end position="515"/>
    </location>
</feature>
<feature type="zinc finger region" description="C2H2-type" evidence="3">
    <location>
        <begin position="14"/>
        <end position="37"/>
    </location>
</feature>
<feature type="zinc finger region" description="FYVE-type" evidence="4">
    <location>
        <begin position="157"/>
        <end position="260"/>
    </location>
</feature>
<feature type="region of interest" description="Necessary for the correct targeting to endosomes">
    <location>
        <begin position="100"/>
        <end position="263"/>
    </location>
</feature>
<feature type="region of interest" description="Disordered" evidence="5">
    <location>
        <begin position="207"/>
        <end position="241"/>
    </location>
</feature>
<feature type="region of interest" description="Necessary for interaction with EHD1" evidence="8">
    <location>
        <begin position="264"/>
        <end position="784"/>
    </location>
</feature>
<feature type="region of interest" description="Necessary for interaction with RAB4A">
    <location>
        <begin position="264"/>
        <end position="500"/>
    </location>
</feature>
<feature type="region of interest" description="Disordered" evidence="5">
    <location>
        <begin position="390"/>
        <end position="429"/>
    </location>
</feature>
<feature type="region of interest" description="Disordered" evidence="5">
    <location>
        <begin position="574"/>
        <end position="732"/>
    </location>
</feature>
<feature type="region of interest" description="Necessary for interaction with RAB5A">
    <location>
        <begin position="627"/>
        <end position="784"/>
    </location>
</feature>
<feature type="coiled-coil region" evidence="2">
    <location>
        <begin position="378"/>
        <end position="414"/>
    </location>
</feature>
<feature type="coiled-coil region" evidence="2">
    <location>
        <begin position="472"/>
        <end position="531"/>
    </location>
</feature>
<feature type="compositionally biased region" description="Polar residues" evidence="5">
    <location>
        <begin position="207"/>
        <end position="224"/>
    </location>
</feature>
<feature type="compositionally biased region" description="Low complexity" evidence="5">
    <location>
        <begin position="228"/>
        <end position="240"/>
    </location>
</feature>
<feature type="compositionally biased region" description="Basic and acidic residues" evidence="5">
    <location>
        <begin position="390"/>
        <end position="400"/>
    </location>
</feature>
<feature type="compositionally biased region" description="Polar residues" evidence="5">
    <location>
        <begin position="579"/>
        <end position="598"/>
    </location>
</feature>
<feature type="compositionally biased region" description="Acidic residues" evidence="5">
    <location>
        <begin position="663"/>
        <end position="673"/>
    </location>
</feature>
<feature type="compositionally biased region" description="Acidic residues" evidence="5">
    <location>
        <begin position="722"/>
        <end position="732"/>
    </location>
</feature>
<feature type="binding site" evidence="4">
    <location>
        <position position="163"/>
    </location>
    <ligand>
        <name>Zn(2+)</name>
        <dbReference type="ChEBI" id="CHEBI:29105"/>
        <label>1</label>
    </ligand>
</feature>
<feature type="binding site" evidence="4">
    <location>
        <position position="166"/>
    </location>
    <ligand>
        <name>Zn(2+)</name>
        <dbReference type="ChEBI" id="CHEBI:29105"/>
        <label>1</label>
    </ligand>
</feature>
<feature type="binding site" evidence="4">
    <location>
        <position position="179"/>
    </location>
    <ligand>
        <name>Zn(2+)</name>
        <dbReference type="ChEBI" id="CHEBI:29105"/>
        <label>2</label>
    </ligand>
</feature>
<feature type="binding site" evidence="4">
    <location>
        <position position="182"/>
    </location>
    <ligand>
        <name>Zn(2+)</name>
        <dbReference type="ChEBI" id="CHEBI:29105"/>
        <label>2</label>
    </ligand>
</feature>
<feature type="binding site" evidence="4">
    <location>
        <position position="187"/>
    </location>
    <ligand>
        <name>Zn(2+)</name>
        <dbReference type="ChEBI" id="CHEBI:29105"/>
        <label>1</label>
    </ligand>
</feature>
<feature type="binding site" evidence="4">
    <location>
        <position position="190"/>
    </location>
    <ligand>
        <name>Zn(2+)</name>
        <dbReference type="ChEBI" id="CHEBI:29105"/>
        <label>1</label>
    </ligand>
</feature>
<feature type="binding site" evidence="4">
    <location>
        <position position="252"/>
    </location>
    <ligand>
        <name>Zn(2+)</name>
        <dbReference type="ChEBI" id="CHEBI:29105"/>
        <label>2</label>
    </ligand>
</feature>
<feature type="binding site" evidence="4">
    <location>
        <position position="255"/>
    </location>
    <ligand>
        <name>Zn(2+)</name>
        <dbReference type="ChEBI" id="CHEBI:29105"/>
        <label>2</label>
    </ligand>
</feature>
<feature type="modified residue" description="N-acetylalanine" evidence="19">
    <location>
        <position position="2"/>
    </location>
</feature>
<feature type="modified residue" description="Phosphoserine" evidence="20">
    <location>
        <position position="3"/>
    </location>
</feature>
<feature type="modified residue" description="Phosphoserine" evidence="1">
    <location>
        <position position="215"/>
    </location>
</feature>
<feature type="modified residue" description="Phosphoserine" evidence="20">
    <location>
        <position position="219"/>
    </location>
</feature>
<feature type="modified residue" description="Phosphoserine" evidence="20">
    <location>
        <position position="226"/>
    </location>
</feature>
<feature type="modified residue" description="Phosphoserine" evidence="20">
    <location>
        <position position="230"/>
    </location>
</feature>
<feature type="modified residue" description="Phosphoserine" evidence="21">
    <location>
        <position position="684"/>
    </location>
</feature>
<feature type="splice variant" id="VSP_056003" description="In isoform 2." evidence="16">
    <original>NKLTSASKE</original>
    <variation>KITTLHGES</variation>
    <location>
        <begin position="200"/>
        <end position="208"/>
    </location>
</feature>
<feature type="splice variant" id="VSP_056004" description="In isoform 2." evidence="16">
    <location>
        <begin position="209"/>
        <end position="784"/>
    </location>
</feature>
<feature type="sequence variant" id="VAR_089994" description="In MFANDO; likely pathogenic; the genetic variation producing this missense variant predominantly affects splicing and the protein resulting from this aberrant splicing may be unstable, as it could not be detected in patient's cells; might affect the endosomal recycling rate." evidence="13">
    <original>G</original>
    <variation>R</variation>
    <location>
        <position position="97"/>
    </location>
</feature>
<feature type="sequence variant" id="VAR_089995" description="In KAREVS; likely pathogenic; dbSNP:rs745678941." evidence="14">
    <original>R</original>
    <variation>G</variation>
    <location>
        <position position="180"/>
    </location>
</feature>
<feature type="sequence variant" id="VAR_089996" description="In KAREVS; likely pathogenic; loss of localization to early endosomes, strongly decreased interaction with phosphatidylinositol 3-phosphate; does not affect protein expression levels; homozygous patient's cells show an impaired endolysosomal degradation pathway, but no effect on endosomal recycling compared to wild-type cells; dbSNP:rs376613564." evidence="14">
    <original>G</original>
    <variation>R</variation>
    <location>
        <position position="183"/>
    </location>
</feature>
<feature type="sequence variant" id="VAR_072416" description="Found in a patient with intractable epileptic encephalopathy, developmental delay and additional multi-organ symptoms; uncertain significance; dbSNP:rs144008665." evidence="12">
    <original>G</original>
    <variation>R</variation>
    <location>
        <position position="425"/>
    </location>
</feature>
<feature type="sequence variant" id="VAR_052982" description="In dbSNP:rs9868848.">
    <original>L</original>
    <variation>P</variation>
    <location>
        <position position="591"/>
    </location>
</feature>
<feature type="sequence variant" id="VAR_052983" description="In dbSNP:rs9851219.">
    <original>T</original>
    <variation>A</variation>
    <location>
        <position position="641"/>
    </location>
</feature>
<feature type="sequence variant" id="VAR_052984" description="In dbSNP:rs9830744.">
    <original>M</original>
    <variation>I</variation>
    <location>
        <position position="722"/>
    </location>
</feature>
<feature type="mutagenesis site" description="Reduces the interaction with EHD1. Abolishes the interaction with EHD1; when associated with 662-APA-664." evidence="8">
    <original>NPF</original>
    <variation>APA</variation>
    <location>
        <begin position="626"/>
        <end position="628"/>
    </location>
</feature>
<feature type="mutagenesis site" description="Reduces the interaction with EHD1. Abolishes the interaction with EHD1; when associated with 626-APA-628." evidence="8">
    <original>NPF</original>
    <variation>APA</variation>
    <location>
        <begin position="662"/>
        <end position="664"/>
    </location>
</feature>
<feature type="sequence conflict" description="In Ref. 1; AAG33246." evidence="17" ref="1">
    <original>F</original>
    <variation>L</variation>
    <location>
        <position position="106"/>
    </location>
</feature>
<feature type="sequence conflict" description="In Ref. 1; AAG33246." evidence="17" ref="1">
    <original>F</original>
    <variation>L</variation>
    <location>
        <position position="720"/>
    </location>
</feature>
<feature type="helix" evidence="22">
    <location>
        <begin position="458"/>
        <end position="475"/>
    </location>
</feature>
<feature type="helix" evidence="22">
    <location>
        <begin position="479"/>
        <end position="500"/>
    </location>
</feature>
<feature type="helix" evidence="23">
    <location>
        <begin position="736"/>
        <end position="755"/>
    </location>
</feature>
<feature type="helix" evidence="23">
    <location>
        <begin position="759"/>
        <end position="779"/>
    </location>
</feature>
<name>RBNS5_HUMAN</name>
<proteinExistence type="evidence at protein level"/>